<reference key="1">
    <citation type="journal article" date="2005" name="Genome Res.">
        <title>Complete genome sequence of the hyperthermophilic archaeon Thermococcus kodakaraensis KOD1 and comparison with Pyrococcus genomes.</title>
        <authorList>
            <person name="Fukui T."/>
            <person name="Atomi H."/>
            <person name="Kanai T."/>
            <person name="Matsumi R."/>
            <person name="Fujiwara S."/>
            <person name="Imanaka T."/>
        </authorList>
    </citation>
    <scope>NUCLEOTIDE SEQUENCE [LARGE SCALE GENOMIC DNA]</scope>
    <source>
        <strain>ATCC BAA-918 / JCM 12380 / KOD1</strain>
    </source>
</reference>
<comment type="catalytic activity">
    <reaction evidence="1">
        <text>L-arginine + H(+) = agmatine + CO2</text>
        <dbReference type="Rhea" id="RHEA:17641"/>
        <dbReference type="ChEBI" id="CHEBI:15378"/>
        <dbReference type="ChEBI" id="CHEBI:16526"/>
        <dbReference type="ChEBI" id="CHEBI:32682"/>
        <dbReference type="ChEBI" id="CHEBI:58145"/>
        <dbReference type="EC" id="4.1.1.19"/>
    </reaction>
</comment>
<comment type="cofactor">
    <cofactor evidence="1">
        <name>pyruvate</name>
        <dbReference type="ChEBI" id="CHEBI:15361"/>
    </cofactor>
    <text evidence="1">Binds 1 pyruvoyl group covalently per subunit.</text>
</comment>
<comment type="similarity">
    <text evidence="1">Belongs to the PdaD family.</text>
</comment>
<gene>
    <name evidence="1" type="primary">pdaD</name>
    <name type="ordered locus">TK0149</name>
</gene>
<dbReference type="EC" id="4.1.1.19" evidence="1"/>
<dbReference type="EMBL" id="AP006878">
    <property type="protein sequence ID" value="BAD84338.1"/>
    <property type="molecule type" value="Genomic_DNA"/>
</dbReference>
<dbReference type="RefSeq" id="WP_011249104.1">
    <property type="nucleotide sequence ID" value="NC_006624.1"/>
</dbReference>
<dbReference type="SMR" id="Q5JFI4"/>
<dbReference type="IntAct" id="Q5JFI4">
    <property type="interactions" value="1"/>
</dbReference>
<dbReference type="MINT" id="Q5JFI4"/>
<dbReference type="STRING" id="69014.TK0149"/>
<dbReference type="EnsemblBacteria" id="BAD84338">
    <property type="protein sequence ID" value="BAD84338"/>
    <property type="gene ID" value="TK0149"/>
</dbReference>
<dbReference type="GeneID" id="3234595"/>
<dbReference type="KEGG" id="tko:TK0149"/>
<dbReference type="PATRIC" id="fig|69014.16.peg.149"/>
<dbReference type="eggNOG" id="arCOG04490">
    <property type="taxonomic scope" value="Archaea"/>
</dbReference>
<dbReference type="HOGENOM" id="CLU_114389_2_0_2"/>
<dbReference type="InParanoid" id="Q5JFI4"/>
<dbReference type="OrthoDB" id="30748at2157"/>
<dbReference type="PhylomeDB" id="Q5JFI4"/>
<dbReference type="BioCyc" id="MetaCyc:MONOMER-16731"/>
<dbReference type="BRENDA" id="4.1.1.19">
    <property type="organism ID" value="5246"/>
</dbReference>
<dbReference type="Proteomes" id="UP000000536">
    <property type="component" value="Chromosome"/>
</dbReference>
<dbReference type="GO" id="GO:0008792">
    <property type="term" value="F:arginine decarboxylase activity"/>
    <property type="evidence" value="ECO:0007669"/>
    <property type="project" value="UniProtKB-UniRule"/>
</dbReference>
<dbReference type="GO" id="GO:0006527">
    <property type="term" value="P:arginine catabolic process"/>
    <property type="evidence" value="ECO:0007669"/>
    <property type="project" value="InterPro"/>
</dbReference>
<dbReference type="Gene3D" id="3.30.60.30">
    <property type="match status" value="1"/>
</dbReference>
<dbReference type="Gene3D" id="3.50.20.10">
    <property type="entry name" value="Pyruvoyl-Dependent Histidine Decarboxylase, subunit B"/>
    <property type="match status" value="1"/>
</dbReference>
<dbReference type="HAMAP" id="MF_01404">
    <property type="entry name" value="PvlArgDC"/>
    <property type="match status" value="1"/>
</dbReference>
<dbReference type="InterPro" id="IPR016104">
    <property type="entry name" value="Pyr-dep_his/arg-deCO2ase"/>
</dbReference>
<dbReference type="InterPro" id="IPR016105">
    <property type="entry name" value="Pyr-dep_his/arg-deCO2ase_sand"/>
</dbReference>
<dbReference type="InterPro" id="IPR002724">
    <property type="entry name" value="Pyruvoyl-dep_arg_deCO2ase"/>
</dbReference>
<dbReference type="NCBIfam" id="TIGR00286">
    <property type="entry name" value="pyruvoyl-dependent arginine decarboxylase"/>
    <property type="match status" value="1"/>
</dbReference>
<dbReference type="PANTHER" id="PTHR40438">
    <property type="entry name" value="PYRUVOYL-DEPENDENT ARGININE DECARBOXYLASE"/>
    <property type="match status" value="1"/>
</dbReference>
<dbReference type="PANTHER" id="PTHR40438:SF1">
    <property type="entry name" value="PYRUVOYL-DEPENDENT ARGININE DECARBOXYLASE"/>
    <property type="match status" value="1"/>
</dbReference>
<dbReference type="Pfam" id="PF01862">
    <property type="entry name" value="PvlArgDC"/>
    <property type="match status" value="1"/>
</dbReference>
<dbReference type="PIRSF" id="PIRSF005216">
    <property type="entry name" value="Pyruvoyl-dep_arg_deCO2ase"/>
    <property type="match status" value="1"/>
</dbReference>
<dbReference type="SFLD" id="SFLDF00471">
    <property type="entry name" value="Pyruvoyl-dependent_arginine_de"/>
    <property type="match status" value="1"/>
</dbReference>
<dbReference type="SFLD" id="SFLDG01170">
    <property type="entry name" value="Pyruvoyl-dependent_arginine_de"/>
    <property type="match status" value="1"/>
</dbReference>
<dbReference type="SFLD" id="SFLDS00055">
    <property type="entry name" value="Pyruvoyl-Dependent_Histidine/A"/>
    <property type="match status" value="1"/>
</dbReference>
<dbReference type="SUPFAM" id="SSF56271">
    <property type="entry name" value="Pyruvoyl-dependent histidine and arginine decarboxylases"/>
    <property type="match status" value="1"/>
</dbReference>
<name>PDAD_THEKO</name>
<accession>Q5JFI4</accession>
<feature type="chain" id="PRO_0000023334" description="Pyruvoyl-dependent arginine decarboxylase subunit beta" evidence="1">
    <location>
        <begin position="1"/>
        <end position="43"/>
    </location>
</feature>
<feature type="chain" id="PRO_0000023335" description="Pyruvoyl-dependent arginine decarboxylase subunit alpha" evidence="1">
    <location>
        <begin position="44"/>
        <end position="157"/>
    </location>
</feature>
<feature type="site" description="Cleavage (non-hydrolytic)" evidence="1">
    <location>
        <begin position="43"/>
        <end position="44"/>
    </location>
</feature>
<feature type="modified residue" description="Pyruvic acid (Ser)" evidence="1">
    <location>
        <position position="44"/>
    </location>
</feature>
<sequence>MSWTTPKRAFIGAATAEGGTKLNAFDNALLKLGIGNVNLVKLSSVIPAHIEWMEKVHDVPIGMLLPTVYAHIESDEPGMTISAALGVGISKNNEGGLIYEYSGYCTKEEAEEMVRKMVEEGFRQRGWELGEFKVASAEITVKDKPAAAIAVVVMFPY</sequence>
<proteinExistence type="inferred from homology"/>
<organism>
    <name type="scientific">Thermococcus kodakarensis (strain ATCC BAA-918 / JCM 12380 / KOD1)</name>
    <name type="common">Pyrococcus kodakaraensis (strain KOD1)</name>
    <dbReference type="NCBI Taxonomy" id="69014"/>
    <lineage>
        <taxon>Archaea</taxon>
        <taxon>Methanobacteriati</taxon>
        <taxon>Methanobacteriota</taxon>
        <taxon>Thermococci</taxon>
        <taxon>Thermococcales</taxon>
        <taxon>Thermococcaceae</taxon>
        <taxon>Thermococcus</taxon>
    </lineage>
</organism>
<evidence type="ECO:0000255" key="1">
    <source>
        <dbReference type="HAMAP-Rule" id="MF_01404"/>
    </source>
</evidence>
<protein>
    <recommendedName>
        <fullName evidence="1">Pyruvoyl-dependent arginine decarboxylase</fullName>
        <shortName evidence="1">PvlArgDC</shortName>
        <ecNumber evidence="1">4.1.1.19</ecNumber>
    </recommendedName>
    <component>
        <recommendedName>
            <fullName evidence="1">Pyruvoyl-dependent arginine decarboxylase subunit beta</fullName>
        </recommendedName>
    </component>
    <component>
        <recommendedName>
            <fullName evidence="1">Pyruvoyl-dependent arginine decarboxylase subunit alpha</fullName>
        </recommendedName>
    </component>
</protein>
<keyword id="KW-0210">Decarboxylase</keyword>
<keyword id="KW-0456">Lyase</keyword>
<keyword id="KW-0670">Pyruvate</keyword>
<keyword id="KW-1185">Reference proteome</keyword>